<proteinExistence type="evidence at protein level"/>
<dbReference type="EMBL" id="AL132955">
    <property type="protein sequence ID" value="CAB61991.1"/>
    <property type="molecule type" value="Genomic_DNA"/>
</dbReference>
<dbReference type="EMBL" id="CP002686">
    <property type="protein sequence ID" value="AEE78314.1"/>
    <property type="molecule type" value="Genomic_DNA"/>
</dbReference>
<dbReference type="EMBL" id="AF370246">
    <property type="protein sequence ID" value="AAK44061.1"/>
    <property type="molecule type" value="mRNA"/>
</dbReference>
<dbReference type="EMBL" id="AY062972">
    <property type="protein sequence ID" value="AAL33818.1"/>
    <property type="molecule type" value="mRNA"/>
</dbReference>
<dbReference type="PIR" id="T45725">
    <property type="entry name" value="T45725"/>
</dbReference>
<dbReference type="RefSeq" id="NP_190349.1">
    <property type="nucleotide sequence ID" value="NM_114633.4"/>
</dbReference>
<dbReference type="PDB" id="6EKB">
    <property type="method" value="X-ray"/>
    <property type="resolution" value="1.90 A"/>
    <property type="chains" value="A=57-136"/>
</dbReference>
<dbReference type="PDB" id="6EKC">
    <property type="method" value="X-ray"/>
    <property type="resolution" value="2.63 A"/>
    <property type="chains" value="B1/B2/B3/B4/B5/B6/B7/B8/D1/D2/D3/D4/D5/D6/D7/D8/F1/F2/F3/F4/F5/F6/F7/F8/H1/H2/H3/H4/H5/H6=57-136"/>
</dbReference>
<dbReference type="PDB" id="8ILB">
    <property type="method" value="EM"/>
    <property type="resolution" value="3.00 A"/>
    <property type="chains" value="F/G/H/I/O/P/Q/R=57-136"/>
</dbReference>
<dbReference type="PDB" id="8ILM">
    <property type="method" value="EM"/>
    <property type="resolution" value="3.30 A"/>
    <property type="chains" value="C/L/M/N/O/P/Q=57-136"/>
</dbReference>
<dbReference type="PDB" id="9CI1">
    <property type="method" value="EM"/>
    <property type="resolution" value="2.88 A"/>
    <property type="chains" value="1/2/3/4/5/6/7/8=1-136"/>
</dbReference>
<dbReference type="PDB" id="9CI2">
    <property type="method" value="EM"/>
    <property type="resolution" value="2.90 A"/>
    <property type="chains" value="1/2/3/4=1-136"/>
</dbReference>
<dbReference type="PDBsum" id="6EKB"/>
<dbReference type="PDBsum" id="6EKC"/>
<dbReference type="PDBsum" id="8ILB"/>
<dbReference type="PDBsum" id="8ILM"/>
<dbReference type="PDBsum" id="9CI1"/>
<dbReference type="PDBsum" id="9CI2"/>
<dbReference type="EMDB" id="EMD-35532"/>
<dbReference type="EMDB" id="EMD-35536"/>
<dbReference type="EMDB" id="EMD-45607"/>
<dbReference type="EMDB" id="EMD-45608"/>
<dbReference type="SMR" id="Q9SN73"/>
<dbReference type="FunCoup" id="Q9SN73">
    <property type="interactions" value="1739"/>
</dbReference>
<dbReference type="STRING" id="3702.Q9SN73"/>
<dbReference type="PaxDb" id="3702-AT3G47650.1"/>
<dbReference type="ProteomicsDB" id="185827"/>
<dbReference type="EnsemblPlants" id="AT3G47650.1">
    <property type="protein sequence ID" value="AT3G47650.1"/>
    <property type="gene ID" value="AT3G47650"/>
</dbReference>
<dbReference type="GeneID" id="823919"/>
<dbReference type="Gramene" id="AT3G47650.1">
    <property type="protein sequence ID" value="AT3G47650.1"/>
    <property type="gene ID" value="AT3G47650"/>
</dbReference>
<dbReference type="KEGG" id="ath:AT3G47650"/>
<dbReference type="Araport" id="AT3G47650"/>
<dbReference type="TAIR" id="AT3G47650">
    <property type="gene designation" value="BSD2"/>
</dbReference>
<dbReference type="eggNOG" id="ENOG502S25V">
    <property type="taxonomic scope" value="Eukaryota"/>
</dbReference>
<dbReference type="HOGENOM" id="CLU_152807_0_0_1"/>
<dbReference type="InParanoid" id="Q9SN73"/>
<dbReference type="OMA" id="ANFQSWE"/>
<dbReference type="OrthoDB" id="2019540at2759"/>
<dbReference type="PhylomeDB" id="Q9SN73"/>
<dbReference type="PRO" id="PR:Q9SN73"/>
<dbReference type="Proteomes" id="UP000006548">
    <property type="component" value="Chromosome 3"/>
</dbReference>
<dbReference type="ExpressionAtlas" id="Q9SN73">
    <property type="expression patterns" value="baseline and differential"/>
</dbReference>
<dbReference type="GO" id="GO:0009507">
    <property type="term" value="C:chloroplast"/>
    <property type="evidence" value="ECO:0007005"/>
    <property type="project" value="TAIR"/>
</dbReference>
<dbReference type="GO" id="GO:0009570">
    <property type="term" value="C:chloroplast stroma"/>
    <property type="evidence" value="ECO:0000314"/>
    <property type="project" value="UniProtKB"/>
</dbReference>
<dbReference type="GO" id="GO:0005829">
    <property type="term" value="C:cytosol"/>
    <property type="evidence" value="ECO:0007005"/>
    <property type="project" value="TAIR"/>
</dbReference>
<dbReference type="GO" id="GO:0101031">
    <property type="term" value="C:protein folding chaperone complex"/>
    <property type="evidence" value="ECO:0000314"/>
    <property type="project" value="UniProtKB"/>
</dbReference>
<dbReference type="GO" id="GO:0044183">
    <property type="term" value="F:protein folding chaperone"/>
    <property type="evidence" value="ECO:0000314"/>
    <property type="project" value="UniProtKB"/>
</dbReference>
<dbReference type="GO" id="GO:0008270">
    <property type="term" value="F:zinc ion binding"/>
    <property type="evidence" value="ECO:0007669"/>
    <property type="project" value="UniProtKB-KW"/>
</dbReference>
<dbReference type="GO" id="GO:0061077">
    <property type="term" value="P:chaperone-mediated protein folding"/>
    <property type="evidence" value="ECO:0000314"/>
    <property type="project" value="UniProtKB"/>
</dbReference>
<dbReference type="GO" id="GO:0110102">
    <property type="term" value="P:ribulose bisphosphate carboxylase complex assembly"/>
    <property type="evidence" value="ECO:0000314"/>
    <property type="project" value="UniProtKB"/>
</dbReference>
<dbReference type="InterPro" id="IPR036410">
    <property type="entry name" value="HSP_DnaJ_Cys-rich_dom_sf"/>
</dbReference>
<dbReference type="PANTHER" id="PTHR15852">
    <property type="entry name" value="PLASTID TRANSCRIPTIONALLY ACTIVE PROTEIN"/>
    <property type="match status" value="1"/>
</dbReference>
<dbReference type="PANTHER" id="PTHR15852:SF51">
    <property type="entry name" value="PROTEIN BUNDLE SHEATH DEFECTIVE 2, CHLOROPLASTIC"/>
    <property type="match status" value="1"/>
</dbReference>
<dbReference type="Pfam" id="PF25436">
    <property type="entry name" value="BSD2_CRD"/>
    <property type="match status" value="1"/>
</dbReference>
<dbReference type="SUPFAM" id="SSF57938">
    <property type="entry name" value="DnaJ/Hsp40 cysteine-rich domain"/>
    <property type="match status" value="1"/>
</dbReference>
<reference key="1">
    <citation type="journal article" date="2000" name="Nature">
        <title>Sequence and analysis of chromosome 3 of the plant Arabidopsis thaliana.</title>
        <authorList>
            <person name="Salanoubat M."/>
            <person name="Lemcke K."/>
            <person name="Rieger M."/>
            <person name="Ansorge W."/>
            <person name="Unseld M."/>
            <person name="Fartmann B."/>
            <person name="Valle G."/>
            <person name="Bloecker H."/>
            <person name="Perez-Alonso M."/>
            <person name="Obermaier B."/>
            <person name="Delseny M."/>
            <person name="Boutry M."/>
            <person name="Grivell L.A."/>
            <person name="Mache R."/>
            <person name="Puigdomenech P."/>
            <person name="De Simone V."/>
            <person name="Choisne N."/>
            <person name="Artiguenave F."/>
            <person name="Robert C."/>
            <person name="Brottier P."/>
            <person name="Wincker P."/>
            <person name="Cattolico L."/>
            <person name="Weissenbach J."/>
            <person name="Saurin W."/>
            <person name="Quetier F."/>
            <person name="Schaefer M."/>
            <person name="Mueller-Auer S."/>
            <person name="Gabel C."/>
            <person name="Fuchs M."/>
            <person name="Benes V."/>
            <person name="Wurmbach E."/>
            <person name="Drzonek H."/>
            <person name="Erfle H."/>
            <person name="Jordan N."/>
            <person name="Bangert S."/>
            <person name="Wiedelmann R."/>
            <person name="Kranz H."/>
            <person name="Voss H."/>
            <person name="Holland R."/>
            <person name="Brandt P."/>
            <person name="Nyakatura G."/>
            <person name="Vezzi A."/>
            <person name="D'Angelo M."/>
            <person name="Pallavicini A."/>
            <person name="Toppo S."/>
            <person name="Simionati B."/>
            <person name="Conrad A."/>
            <person name="Hornischer K."/>
            <person name="Kauer G."/>
            <person name="Loehnert T.-H."/>
            <person name="Nordsiek G."/>
            <person name="Reichelt J."/>
            <person name="Scharfe M."/>
            <person name="Schoen O."/>
            <person name="Bargues M."/>
            <person name="Terol J."/>
            <person name="Climent J."/>
            <person name="Navarro P."/>
            <person name="Collado C."/>
            <person name="Perez-Perez A."/>
            <person name="Ottenwaelder B."/>
            <person name="Duchemin D."/>
            <person name="Cooke R."/>
            <person name="Laudie M."/>
            <person name="Berger-Llauro C."/>
            <person name="Purnelle B."/>
            <person name="Masuy D."/>
            <person name="de Haan M."/>
            <person name="Maarse A.C."/>
            <person name="Alcaraz J.-P."/>
            <person name="Cottet A."/>
            <person name="Casacuberta E."/>
            <person name="Monfort A."/>
            <person name="Argiriou A."/>
            <person name="Flores M."/>
            <person name="Liguori R."/>
            <person name="Vitale D."/>
            <person name="Mannhaupt G."/>
            <person name="Haase D."/>
            <person name="Schoof H."/>
            <person name="Rudd S."/>
            <person name="Zaccaria P."/>
            <person name="Mewes H.-W."/>
            <person name="Mayer K.F.X."/>
            <person name="Kaul S."/>
            <person name="Town C.D."/>
            <person name="Koo H.L."/>
            <person name="Tallon L.J."/>
            <person name="Jenkins J."/>
            <person name="Rooney T."/>
            <person name="Rizzo M."/>
            <person name="Walts A."/>
            <person name="Utterback T."/>
            <person name="Fujii C.Y."/>
            <person name="Shea T.P."/>
            <person name="Creasy T.H."/>
            <person name="Haas B."/>
            <person name="Maiti R."/>
            <person name="Wu D."/>
            <person name="Peterson J."/>
            <person name="Van Aken S."/>
            <person name="Pai G."/>
            <person name="Militscher J."/>
            <person name="Sellers P."/>
            <person name="Gill J.E."/>
            <person name="Feldblyum T.V."/>
            <person name="Preuss D."/>
            <person name="Lin X."/>
            <person name="Nierman W.C."/>
            <person name="Salzberg S.L."/>
            <person name="White O."/>
            <person name="Venter J.C."/>
            <person name="Fraser C.M."/>
            <person name="Kaneko T."/>
            <person name="Nakamura Y."/>
            <person name="Sato S."/>
            <person name="Kato T."/>
            <person name="Asamizu E."/>
            <person name="Sasamoto S."/>
            <person name="Kimura T."/>
            <person name="Idesawa K."/>
            <person name="Kawashima K."/>
            <person name="Kishida Y."/>
            <person name="Kiyokawa C."/>
            <person name="Kohara M."/>
            <person name="Matsumoto M."/>
            <person name="Matsuno A."/>
            <person name="Muraki A."/>
            <person name="Nakayama S."/>
            <person name="Nakazaki N."/>
            <person name="Shinpo S."/>
            <person name="Takeuchi C."/>
            <person name="Wada T."/>
            <person name="Watanabe A."/>
            <person name="Yamada M."/>
            <person name="Yasuda M."/>
            <person name="Tabata S."/>
        </authorList>
    </citation>
    <scope>NUCLEOTIDE SEQUENCE [LARGE SCALE GENOMIC DNA]</scope>
    <source>
        <strain>cv. Columbia</strain>
    </source>
</reference>
<reference key="2">
    <citation type="journal article" date="2017" name="Plant J.">
        <title>Araport11: a complete reannotation of the Arabidopsis thaliana reference genome.</title>
        <authorList>
            <person name="Cheng C.Y."/>
            <person name="Krishnakumar V."/>
            <person name="Chan A.P."/>
            <person name="Thibaud-Nissen F."/>
            <person name="Schobel S."/>
            <person name="Town C.D."/>
        </authorList>
    </citation>
    <scope>GENOME REANNOTATION</scope>
    <source>
        <strain>cv. Columbia</strain>
    </source>
</reference>
<reference key="3">
    <citation type="journal article" date="2003" name="Science">
        <title>Empirical analysis of transcriptional activity in the Arabidopsis genome.</title>
        <authorList>
            <person name="Yamada K."/>
            <person name="Lim J."/>
            <person name="Dale J.M."/>
            <person name="Chen H."/>
            <person name="Shinn P."/>
            <person name="Palm C.J."/>
            <person name="Southwick A.M."/>
            <person name="Wu H.C."/>
            <person name="Kim C.J."/>
            <person name="Nguyen M."/>
            <person name="Pham P.K."/>
            <person name="Cheuk R.F."/>
            <person name="Karlin-Newmann G."/>
            <person name="Liu S.X."/>
            <person name="Lam B."/>
            <person name="Sakano H."/>
            <person name="Wu T."/>
            <person name="Yu G."/>
            <person name="Miranda M."/>
            <person name="Quach H.L."/>
            <person name="Tripp M."/>
            <person name="Chang C.H."/>
            <person name="Lee J.M."/>
            <person name="Toriumi M.J."/>
            <person name="Chan M.M."/>
            <person name="Tang C.C."/>
            <person name="Onodera C.S."/>
            <person name="Deng J.M."/>
            <person name="Akiyama K."/>
            <person name="Ansari Y."/>
            <person name="Arakawa T."/>
            <person name="Banh J."/>
            <person name="Banno F."/>
            <person name="Bowser L."/>
            <person name="Brooks S.Y."/>
            <person name="Carninci P."/>
            <person name="Chao Q."/>
            <person name="Choy N."/>
            <person name="Enju A."/>
            <person name="Goldsmith A.D."/>
            <person name="Gurjal M."/>
            <person name="Hansen N.F."/>
            <person name="Hayashizaki Y."/>
            <person name="Johnson-Hopson C."/>
            <person name="Hsuan V.W."/>
            <person name="Iida K."/>
            <person name="Karnes M."/>
            <person name="Khan S."/>
            <person name="Koesema E."/>
            <person name="Ishida J."/>
            <person name="Jiang P.X."/>
            <person name="Jones T."/>
            <person name="Kawai J."/>
            <person name="Kamiya A."/>
            <person name="Meyers C."/>
            <person name="Nakajima M."/>
            <person name="Narusaka M."/>
            <person name="Seki M."/>
            <person name="Sakurai T."/>
            <person name="Satou M."/>
            <person name="Tamse R."/>
            <person name="Vaysberg M."/>
            <person name="Wallender E.K."/>
            <person name="Wong C."/>
            <person name="Yamamura Y."/>
            <person name="Yuan S."/>
            <person name="Shinozaki K."/>
            <person name="Davis R.W."/>
            <person name="Theologis A."/>
            <person name="Ecker J.R."/>
        </authorList>
    </citation>
    <scope>NUCLEOTIDE SEQUENCE [LARGE SCALE MRNA]</scope>
    <source>
        <strain>cv. Columbia</strain>
    </source>
</reference>
<reference key="4">
    <citation type="journal article" date="2017" name="Science">
        <title>Plant RuBisCo assembly in E. coli with five chloroplast chaperones including BSD2.</title>
        <authorList>
            <person name="Aigner H."/>
            <person name="Wilson R.H."/>
            <person name="Bracher A."/>
            <person name="Calisse L."/>
            <person name="Bhat J.Y."/>
            <person name="Hartl F.U."/>
            <person name="Hayer-Hartl M."/>
        </authorList>
    </citation>
    <scope>X-RAY CRYSTALLOGRAPHY (1.90 ANGSTROMS) OF 57-136 IN COMPLEX WITH ZINC IONS AND RBCL</scope>
    <scope>FUNCTION</scope>
    <scope>MUTAGENESIS OF 95-ASP--PHE-97; 100-GLN--LYS-102; 108-TRP-LEU-109; 111-ARG--LYS-113 AND 117-LEU--GLY-119</scope>
    <scope>INTERACTION WITH RBCL</scope>
</reference>
<gene>
    <name evidence="6" type="primary">BSD2</name>
    <name evidence="8" type="ordered locus">At3g47650</name>
    <name evidence="9" type="ORF">F1P2.200</name>
</gene>
<sequence>MANSLCFFSSPPTFCFQSPSKNPKPSHFFSTNDNTSSLVQKRELLQTSRSQSFEVKAANNNPQGTKPNSLVCANCEGEGCVACSQCKGGGVNLIDHFNGQFKAGALCWLCRGKKEVLCGDCNGAGFIGGFLSTFDE</sequence>
<accession>Q9SN73</accession>
<accession>A0A178VHR7</accession>
<keyword id="KW-0002">3D-structure</keyword>
<keyword id="KW-0143">Chaperone</keyword>
<keyword id="KW-0150">Chloroplast</keyword>
<keyword id="KW-0479">Metal-binding</keyword>
<keyword id="KW-0934">Plastid</keyword>
<keyword id="KW-1185">Reference proteome</keyword>
<keyword id="KW-0677">Repeat</keyword>
<keyword id="KW-0809">Transit peptide</keyword>
<keyword id="KW-0862">Zinc</keyword>
<keyword id="KW-0863">Zinc-finger</keyword>
<name>BSD2_ARATH</name>
<feature type="transit peptide" description="Chloroplast" evidence="3">
    <location>
        <begin position="1"/>
        <end position="56"/>
    </location>
</feature>
<feature type="chain" id="PRO_0000447230" description="Protein BUNDLE SHEATH DEFECTIVE 2, chloroplastic">
    <location>
        <begin position="57"/>
        <end position="136"/>
    </location>
</feature>
<feature type="zinc finger region" description="CR-type" evidence="4">
    <location>
        <begin position="62"/>
        <end position="133"/>
    </location>
</feature>
<feature type="binding site" evidence="5 10 11">
    <location>
        <position position="72"/>
    </location>
    <ligand>
        <name>Zn(2+)</name>
        <dbReference type="ChEBI" id="CHEBI:29105"/>
        <label>1</label>
    </ligand>
</feature>
<feature type="binding site" evidence="5 10 11">
    <location>
        <position position="75"/>
    </location>
    <ligand>
        <name>Zn(2+)</name>
        <dbReference type="ChEBI" id="CHEBI:29105"/>
        <label>1</label>
    </ligand>
</feature>
<feature type="binding site" evidence="5 10">
    <location>
        <position position="78"/>
    </location>
    <ligand>
        <name>Zn(2+)</name>
        <dbReference type="ChEBI" id="CHEBI:29105"/>
        <label>3</label>
    </ligand>
</feature>
<feature type="binding site" evidence="5 10">
    <location>
        <position position="80"/>
    </location>
    <ligand>
        <name>Zn(2+)</name>
        <dbReference type="ChEBI" id="CHEBI:29105"/>
        <label>3</label>
    </ligand>
</feature>
<feature type="binding site" evidence="5 10 11">
    <location>
        <position position="83"/>
    </location>
    <ligand>
        <name>Zn(2+)</name>
        <dbReference type="ChEBI" id="CHEBI:29105"/>
        <label>2</label>
    </ligand>
</feature>
<feature type="binding site" evidence="5 10 11">
    <location>
        <position position="86"/>
    </location>
    <ligand>
        <name>Zn(2+)</name>
        <dbReference type="ChEBI" id="CHEBI:29105"/>
        <label>2</label>
    </ligand>
</feature>
<feature type="binding site" evidence="5 10 11">
    <location>
        <position position="107"/>
    </location>
    <ligand>
        <name>Zn(2+)</name>
        <dbReference type="ChEBI" id="CHEBI:29105"/>
        <label>2</label>
    </ligand>
</feature>
<feature type="binding site" evidence="5 10 11">
    <location>
        <position position="110"/>
    </location>
    <ligand>
        <name>Zn(2+)</name>
        <dbReference type="ChEBI" id="CHEBI:29105"/>
        <label>2</label>
    </ligand>
</feature>
<feature type="binding site" evidence="5 10">
    <location>
        <position position="115"/>
    </location>
    <ligand>
        <name>Zn(2+)</name>
        <dbReference type="ChEBI" id="CHEBI:29105"/>
        <label>3</label>
    </ligand>
</feature>
<feature type="binding site" evidence="5 10 11">
    <location>
        <position position="118"/>
    </location>
    <ligand>
        <name>Zn(2+)</name>
        <dbReference type="ChEBI" id="CHEBI:29105"/>
        <label>1</label>
    </ligand>
</feature>
<feature type="binding site" evidence="5 10 11">
    <location>
        <position position="121"/>
    </location>
    <ligand>
        <name>Zn(2+)</name>
        <dbReference type="ChEBI" id="CHEBI:29105"/>
        <label>1</label>
    </ligand>
</feature>
<feature type="mutagenesis site" description="No visible impact on chaperone function." evidence="5">
    <original>DHF</original>
    <variation>NHS</variation>
    <location>
        <begin position="95"/>
        <end position="97"/>
    </location>
</feature>
<feature type="mutagenesis site" description="No visible impact on chaperone function." evidence="5">
    <original>QFK</original>
    <variation>EAA</variation>
    <location>
        <begin position="100"/>
        <end position="102"/>
    </location>
</feature>
<feature type="mutagenesis site" description="Impaired chaperone function leading to altered stabilization of RbcL complexes and reduction of assembled RuBisCo." evidence="5">
    <original>WL</original>
    <variation>AE</variation>
    <location>
        <begin position="108"/>
        <end position="109"/>
    </location>
</feature>
<feature type="mutagenesis site" description="Impaired chaperone function leading to altered stabilization of RbcL complexes and reduction of assembled RuBisCo." evidence="5">
    <original>RGK</original>
    <variation>EGE</variation>
    <location>
        <begin position="111"/>
        <end position="113"/>
    </location>
</feature>
<feature type="mutagenesis site" description="Impaired chaperone function leading to altered stabilization of RbcL complexes and reduction of assembled RuBisCo." evidence="5">
    <original>LCG</original>
    <variation>ECT</variation>
    <location>
        <begin position="117"/>
        <end position="119"/>
    </location>
</feature>
<feature type="strand" evidence="14">
    <location>
        <begin position="69"/>
        <end position="72"/>
    </location>
</feature>
<feature type="turn" evidence="12">
    <location>
        <begin position="73"/>
        <end position="77"/>
    </location>
</feature>
<feature type="strand" evidence="12">
    <location>
        <begin position="79"/>
        <end position="82"/>
    </location>
</feature>
<feature type="turn" evidence="12">
    <location>
        <begin position="84"/>
        <end position="88"/>
    </location>
</feature>
<feature type="strand" evidence="12">
    <location>
        <begin position="89"/>
        <end position="91"/>
    </location>
</feature>
<feature type="turn" evidence="13">
    <location>
        <begin position="97"/>
        <end position="100"/>
    </location>
</feature>
<feature type="strand" evidence="13">
    <location>
        <begin position="103"/>
        <end position="106"/>
    </location>
</feature>
<feature type="turn" evidence="12">
    <location>
        <begin position="108"/>
        <end position="112"/>
    </location>
</feature>
<feature type="strand" evidence="12">
    <location>
        <begin position="115"/>
        <end position="117"/>
    </location>
</feature>
<feature type="turn" evidence="12">
    <location>
        <begin position="119"/>
        <end position="123"/>
    </location>
</feature>
<feature type="strand" evidence="12">
    <location>
        <begin position="124"/>
        <end position="127"/>
    </location>
</feature>
<feature type="turn" evidence="14">
    <location>
        <begin position="130"/>
        <end position="132"/>
    </location>
</feature>
<comment type="function">
    <text evidence="5">Chloroplast chaperone required for RuBisCo biogenesis and translational regulation of the RuBisCo large subunit (RbcL) (PubMed:29217567). Stabilizes an end-state assembly intermediate of eight RbcL subunits until the small subunits (RBCSs) become available to produce a complete stable RuBisCo complex containing eight small and eight large subunits (PubMed:29217567).</text>
</comment>
<comment type="subunit">
    <text evidence="5">Interacts with the RuBisCo large subunit (RbcL) assembled as an intermediate complex made of eight RbcL and eight BSD2 subunits.</text>
</comment>
<comment type="subcellular location">
    <subcellularLocation>
        <location evidence="2">Plastid</location>
        <location evidence="2">Chloroplast stroma</location>
    </subcellularLocation>
    <text evidence="1">Associates with chloroplastic polysomes.</text>
</comment>
<comment type="similarity">
    <text evidence="7">Belongs to the BSD2 chaperone family.</text>
</comment>
<protein>
    <recommendedName>
        <fullName evidence="6">Protein BUNDLE SHEATH DEFECTIVE 2, chloroplastic</fullName>
        <shortName evidence="6">AtBSD2</shortName>
    </recommendedName>
</protein>
<evidence type="ECO:0000250" key="1">
    <source>
        <dbReference type="UniProtKB" id="A0A2K3DZC4"/>
    </source>
</evidence>
<evidence type="ECO:0000250" key="2">
    <source>
        <dbReference type="UniProtKB" id="Q9XF14"/>
    </source>
</evidence>
<evidence type="ECO:0000255" key="3"/>
<evidence type="ECO:0000255" key="4">
    <source>
        <dbReference type="PROSITE-ProRule" id="PRU00546"/>
    </source>
</evidence>
<evidence type="ECO:0000269" key="5">
    <source>
    </source>
</evidence>
<evidence type="ECO:0000303" key="6">
    <source>
    </source>
</evidence>
<evidence type="ECO:0000305" key="7"/>
<evidence type="ECO:0000312" key="8">
    <source>
        <dbReference type="Araport" id="AT3G47650"/>
    </source>
</evidence>
<evidence type="ECO:0000312" key="9">
    <source>
        <dbReference type="EMBL" id="CAB61991.1"/>
    </source>
</evidence>
<evidence type="ECO:0007744" key="10">
    <source>
        <dbReference type="PDB" id="6EKB"/>
    </source>
</evidence>
<evidence type="ECO:0007744" key="11">
    <source>
        <dbReference type="PDB" id="6EKC"/>
    </source>
</evidence>
<evidence type="ECO:0007829" key="12">
    <source>
        <dbReference type="PDB" id="6EKB"/>
    </source>
</evidence>
<evidence type="ECO:0007829" key="13">
    <source>
        <dbReference type="PDB" id="9CI1"/>
    </source>
</evidence>
<evidence type="ECO:0007829" key="14">
    <source>
        <dbReference type="PDB" id="9CI2"/>
    </source>
</evidence>
<organism>
    <name type="scientific">Arabidopsis thaliana</name>
    <name type="common">Mouse-ear cress</name>
    <dbReference type="NCBI Taxonomy" id="3702"/>
    <lineage>
        <taxon>Eukaryota</taxon>
        <taxon>Viridiplantae</taxon>
        <taxon>Streptophyta</taxon>
        <taxon>Embryophyta</taxon>
        <taxon>Tracheophyta</taxon>
        <taxon>Spermatophyta</taxon>
        <taxon>Magnoliopsida</taxon>
        <taxon>eudicotyledons</taxon>
        <taxon>Gunneridae</taxon>
        <taxon>Pentapetalae</taxon>
        <taxon>rosids</taxon>
        <taxon>malvids</taxon>
        <taxon>Brassicales</taxon>
        <taxon>Brassicaceae</taxon>
        <taxon>Camelineae</taxon>
        <taxon>Arabidopsis</taxon>
    </lineage>
</organism>